<proteinExistence type="inferred from homology"/>
<evidence type="ECO:0000255" key="1">
    <source>
        <dbReference type="HAMAP-Rule" id="MF_00083"/>
    </source>
</evidence>
<dbReference type="EC" id="3.1.1.29" evidence="1"/>
<dbReference type="EMBL" id="AE005673">
    <property type="protein sequence ID" value="AAK22471.1"/>
    <property type="molecule type" value="Genomic_DNA"/>
</dbReference>
<dbReference type="PIR" id="C87309">
    <property type="entry name" value="C87309"/>
</dbReference>
<dbReference type="RefSeq" id="NP_419303.1">
    <property type="nucleotide sequence ID" value="NC_002696.2"/>
</dbReference>
<dbReference type="RefSeq" id="WP_010918372.1">
    <property type="nucleotide sequence ID" value="NC_002696.2"/>
</dbReference>
<dbReference type="SMR" id="Q9AAV9"/>
<dbReference type="STRING" id="190650.CC_0484"/>
<dbReference type="EnsemblBacteria" id="AAK22471">
    <property type="protein sequence ID" value="AAK22471"/>
    <property type="gene ID" value="CC_0484"/>
</dbReference>
<dbReference type="KEGG" id="ccr:CC_0484"/>
<dbReference type="PATRIC" id="fig|190650.5.peg.491"/>
<dbReference type="eggNOG" id="COG0193">
    <property type="taxonomic scope" value="Bacteria"/>
</dbReference>
<dbReference type="HOGENOM" id="CLU_062456_1_0_5"/>
<dbReference type="BioCyc" id="CAULO:CC0484-MONOMER"/>
<dbReference type="Proteomes" id="UP000001816">
    <property type="component" value="Chromosome"/>
</dbReference>
<dbReference type="GO" id="GO:0005737">
    <property type="term" value="C:cytoplasm"/>
    <property type="evidence" value="ECO:0007669"/>
    <property type="project" value="UniProtKB-SubCell"/>
</dbReference>
<dbReference type="GO" id="GO:0004045">
    <property type="term" value="F:peptidyl-tRNA hydrolase activity"/>
    <property type="evidence" value="ECO:0007669"/>
    <property type="project" value="UniProtKB-UniRule"/>
</dbReference>
<dbReference type="GO" id="GO:0000049">
    <property type="term" value="F:tRNA binding"/>
    <property type="evidence" value="ECO:0007669"/>
    <property type="project" value="UniProtKB-UniRule"/>
</dbReference>
<dbReference type="GO" id="GO:0006515">
    <property type="term" value="P:protein quality control for misfolded or incompletely synthesized proteins"/>
    <property type="evidence" value="ECO:0007669"/>
    <property type="project" value="UniProtKB-UniRule"/>
</dbReference>
<dbReference type="GO" id="GO:0072344">
    <property type="term" value="P:rescue of stalled ribosome"/>
    <property type="evidence" value="ECO:0007669"/>
    <property type="project" value="UniProtKB-UniRule"/>
</dbReference>
<dbReference type="CDD" id="cd00462">
    <property type="entry name" value="PTH"/>
    <property type="match status" value="1"/>
</dbReference>
<dbReference type="Gene3D" id="3.40.50.1470">
    <property type="entry name" value="Peptidyl-tRNA hydrolase"/>
    <property type="match status" value="1"/>
</dbReference>
<dbReference type="HAMAP" id="MF_00083">
    <property type="entry name" value="Pept_tRNA_hydro_bact"/>
    <property type="match status" value="1"/>
</dbReference>
<dbReference type="InterPro" id="IPR001328">
    <property type="entry name" value="Pept_tRNA_hydro"/>
</dbReference>
<dbReference type="InterPro" id="IPR018171">
    <property type="entry name" value="Pept_tRNA_hydro_CS"/>
</dbReference>
<dbReference type="InterPro" id="IPR036416">
    <property type="entry name" value="Pept_tRNA_hydro_sf"/>
</dbReference>
<dbReference type="NCBIfam" id="TIGR00447">
    <property type="entry name" value="pth"/>
    <property type="match status" value="1"/>
</dbReference>
<dbReference type="PANTHER" id="PTHR17224">
    <property type="entry name" value="PEPTIDYL-TRNA HYDROLASE"/>
    <property type="match status" value="1"/>
</dbReference>
<dbReference type="PANTHER" id="PTHR17224:SF1">
    <property type="entry name" value="PEPTIDYL-TRNA HYDROLASE"/>
    <property type="match status" value="1"/>
</dbReference>
<dbReference type="Pfam" id="PF01195">
    <property type="entry name" value="Pept_tRNA_hydro"/>
    <property type="match status" value="1"/>
</dbReference>
<dbReference type="SUPFAM" id="SSF53178">
    <property type="entry name" value="Peptidyl-tRNA hydrolase-like"/>
    <property type="match status" value="1"/>
</dbReference>
<dbReference type="PROSITE" id="PS01195">
    <property type="entry name" value="PEPT_TRNA_HYDROL_1"/>
    <property type="match status" value="1"/>
</dbReference>
<keyword id="KW-0963">Cytoplasm</keyword>
<keyword id="KW-0378">Hydrolase</keyword>
<keyword id="KW-1185">Reference proteome</keyword>
<keyword id="KW-0694">RNA-binding</keyword>
<keyword id="KW-0820">tRNA-binding</keyword>
<name>PTH_CAUVC</name>
<accession>Q9AAV9</accession>
<organism>
    <name type="scientific">Caulobacter vibrioides (strain ATCC 19089 / CIP 103742 / CB 15)</name>
    <name type="common">Caulobacter crescentus</name>
    <dbReference type="NCBI Taxonomy" id="190650"/>
    <lineage>
        <taxon>Bacteria</taxon>
        <taxon>Pseudomonadati</taxon>
        <taxon>Pseudomonadota</taxon>
        <taxon>Alphaproteobacteria</taxon>
        <taxon>Caulobacterales</taxon>
        <taxon>Caulobacteraceae</taxon>
        <taxon>Caulobacter</taxon>
    </lineage>
</organism>
<reference key="1">
    <citation type="journal article" date="2001" name="Proc. Natl. Acad. Sci. U.S.A.">
        <title>Complete genome sequence of Caulobacter crescentus.</title>
        <authorList>
            <person name="Nierman W.C."/>
            <person name="Feldblyum T.V."/>
            <person name="Laub M.T."/>
            <person name="Paulsen I.T."/>
            <person name="Nelson K.E."/>
            <person name="Eisen J.A."/>
            <person name="Heidelberg J.F."/>
            <person name="Alley M.R.K."/>
            <person name="Ohta N."/>
            <person name="Maddock J.R."/>
            <person name="Potocka I."/>
            <person name="Nelson W.C."/>
            <person name="Newton A."/>
            <person name="Stephens C."/>
            <person name="Phadke N.D."/>
            <person name="Ely B."/>
            <person name="DeBoy R.T."/>
            <person name="Dodson R.J."/>
            <person name="Durkin A.S."/>
            <person name="Gwinn M.L."/>
            <person name="Haft D.H."/>
            <person name="Kolonay J.F."/>
            <person name="Smit J."/>
            <person name="Craven M.B."/>
            <person name="Khouri H.M."/>
            <person name="Shetty J."/>
            <person name="Berry K.J."/>
            <person name="Utterback T.R."/>
            <person name="Tran K."/>
            <person name="Wolf A.M."/>
            <person name="Vamathevan J.J."/>
            <person name="Ermolaeva M.D."/>
            <person name="White O."/>
            <person name="Salzberg S.L."/>
            <person name="Venter J.C."/>
            <person name="Shapiro L."/>
            <person name="Fraser C.M."/>
        </authorList>
    </citation>
    <scope>NUCLEOTIDE SEQUENCE [LARGE SCALE GENOMIC DNA]</scope>
    <source>
        <strain>ATCC 19089 / CIP 103742 / CB 15</strain>
    </source>
</reference>
<gene>
    <name evidence="1" type="primary">pth</name>
    <name type="ordered locus">CC_0484</name>
</gene>
<sequence>MLILAGLGNPEPKYEKNRHNVGFMAVDALARKWGTAPWRARFQGLACEGQVSTPDGPVKLLLLKPKTYYNESGRAVGEAMKFFKLQPTDVIVFHDEIDMAPGRFRMKSGGGAAGNNGIRSVTSQVGDAFRRGRIGVGHPGHKDAVMHYVLGDFHKVEHQWLDPILDAIADALPFAAVGDDERYQAEVMRLAPAPKADPRKPAKDD</sequence>
<feature type="chain" id="PRO_0000187715" description="Peptidyl-tRNA hydrolase">
    <location>
        <begin position="1"/>
        <end position="205"/>
    </location>
</feature>
<feature type="active site" description="Proton acceptor" evidence="1">
    <location>
        <position position="19"/>
    </location>
</feature>
<feature type="binding site" evidence="1">
    <location>
        <position position="14"/>
    </location>
    <ligand>
        <name>tRNA</name>
        <dbReference type="ChEBI" id="CHEBI:17843"/>
    </ligand>
</feature>
<feature type="binding site" evidence="1">
    <location>
        <position position="68"/>
    </location>
    <ligand>
        <name>tRNA</name>
        <dbReference type="ChEBI" id="CHEBI:17843"/>
    </ligand>
</feature>
<feature type="binding site" evidence="1">
    <location>
        <position position="70"/>
    </location>
    <ligand>
        <name>tRNA</name>
        <dbReference type="ChEBI" id="CHEBI:17843"/>
    </ligand>
</feature>
<feature type="binding site" evidence="1">
    <location>
        <position position="116"/>
    </location>
    <ligand>
        <name>tRNA</name>
        <dbReference type="ChEBI" id="CHEBI:17843"/>
    </ligand>
</feature>
<feature type="site" description="Discriminates between blocked and unblocked aminoacyl-tRNA" evidence="1">
    <location>
        <position position="9"/>
    </location>
</feature>
<feature type="site" description="Stabilizes the basic form of H active site to accept a proton" evidence="1">
    <location>
        <position position="95"/>
    </location>
</feature>
<protein>
    <recommendedName>
        <fullName evidence="1">Peptidyl-tRNA hydrolase</fullName>
        <shortName evidence="1">Pth</shortName>
        <ecNumber evidence="1">3.1.1.29</ecNumber>
    </recommendedName>
</protein>
<comment type="function">
    <text evidence="1">Hydrolyzes ribosome-free peptidyl-tRNAs (with 1 or more amino acids incorporated), which drop off the ribosome during protein synthesis, or as a result of ribosome stalling.</text>
</comment>
<comment type="function">
    <text evidence="1">Catalyzes the release of premature peptidyl moieties from peptidyl-tRNA molecules trapped in stalled 50S ribosomal subunits, and thus maintains levels of free tRNAs and 50S ribosomes.</text>
</comment>
<comment type="catalytic activity">
    <reaction evidence="1">
        <text>an N-acyl-L-alpha-aminoacyl-tRNA + H2O = an N-acyl-L-amino acid + a tRNA + H(+)</text>
        <dbReference type="Rhea" id="RHEA:54448"/>
        <dbReference type="Rhea" id="RHEA-COMP:10123"/>
        <dbReference type="Rhea" id="RHEA-COMP:13883"/>
        <dbReference type="ChEBI" id="CHEBI:15377"/>
        <dbReference type="ChEBI" id="CHEBI:15378"/>
        <dbReference type="ChEBI" id="CHEBI:59874"/>
        <dbReference type="ChEBI" id="CHEBI:78442"/>
        <dbReference type="ChEBI" id="CHEBI:138191"/>
        <dbReference type="EC" id="3.1.1.29"/>
    </reaction>
</comment>
<comment type="subunit">
    <text evidence="1">Monomer.</text>
</comment>
<comment type="subcellular location">
    <subcellularLocation>
        <location evidence="1">Cytoplasm</location>
    </subcellularLocation>
</comment>
<comment type="similarity">
    <text evidence="1">Belongs to the PTH family.</text>
</comment>